<reference key="1">
    <citation type="journal article" date="2002" name="Proc. Natl. Acad. Sci. U.S.A.">
        <title>Extensive mosaic structure revealed by the complete genome sequence of uropathogenic Escherichia coli.</title>
        <authorList>
            <person name="Welch R.A."/>
            <person name="Burland V."/>
            <person name="Plunkett G. III"/>
            <person name="Redford P."/>
            <person name="Roesch P."/>
            <person name="Rasko D."/>
            <person name="Buckles E.L."/>
            <person name="Liou S.-R."/>
            <person name="Boutin A."/>
            <person name="Hackett J."/>
            <person name="Stroud D."/>
            <person name="Mayhew G.F."/>
            <person name="Rose D.J."/>
            <person name="Zhou S."/>
            <person name="Schwartz D.C."/>
            <person name="Perna N.T."/>
            <person name="Mobley H.L.T."/>
            <person name="Donnenberg M.S."/>
            <person name="Blattner F.R."/>
        </authorList>
    </citation>
    <scope>NUCLEOTIDE SEQUENCE [LARGE SCALE GENOMIC DNA]</scope>
    <source>
        <strain>CFT073 / ATCC 700928 / UPEC</strain>
    </source>
</reference>
<reference key="2">
    <citation type="journal article" date="2014" name="Biochemistry">
        <title>Discovery of function in the enolase superfamily: D-mannonate and D-gluconate dehydratases in the D-mannonate dehydratase subgroup.</title>
        <authorList>
            <person name="Wichelecki D.J."/>
            <person name="Balthazor B.M."/>
            <person name="Chau A.C."/>
            <person name="Vetting M.W."/>
            <person name="Fedorov A.A."/>
            <person name="Fedorov E.V."/>
            <person name="Lukk T."/>
            <person name="Patskovsky Y.V."/>
            <person name="Stead M.B."/>
            <person name="Hillerich B.S."/>
            <person name="Seidel R.D."/>
            <person name="Almo S.C."/>
            <person name="Gerlt J.A."/>
        </authorList>
    </citation>
    <scope>X-RAY CRYSTALLOGRAPHY (1.95 ANGSTROMS) IN COMPLEX WITH MAGNESIUM</scope>
    <scope>FUNCTION</scope>
    <scope>CATALYTIC ACTIVITY</scope>
    <scope>COFACTOR</scope>
    <scope>BIOPHYSICOCHEMICAL PROPERTIES</scope>
</reference>
<comment type="function">
    <text evidence="2">Has low D-mannonate dehydratase activity (in vitro), suggesting that this is not a physiological substrate and that it has no significant role in D-mannonate degradation in vivo. Has no detectable activity with a panel of 70 other acid sugars (in vitro).</text>
</comment>
<comment type="catalytic activity">
    <reaction evidence="2">
        <text>D-mannonate = 2-dehydro-3-deoxy-D-gluconate + H2O</text>
        <dbReference type="Rhea" id="RHEA:20097"/>
        <dbReference type="ChEBI" id="CHEBI:15377"/>
        <dbReference type="ChEBI" id="CHEBI:17767"/>
        <dbReference type="ChEBI" id="CHEBI:57990"/>
        <dbReference type="EC" id="4.2.1.8"/>
    </reaction>
</comment>
<comment type="cofactor">
    <cofactor evidence="2">
        <name>Mg(2+)</name>
        <dbReference type="ChEBI" id="CHEBI:18420"/>
    </cofactor>
    <text evidence="2">Binds 1 Mg(2+) ion per subunit.</text>
</comment>
<comment type="biophysicochemical properties">
    <kinetics>
        <text evidence="2">kcat is 0.02 sec(-1) with D-mannonate.</text>
    </kinetics>
</comment>
<comment type="similarity">
    <text evidence="3">Belongs to the mandelate racemase/muconate lactonizing enzyme family. GalD subfamily.</text>
</comment>
<feature type="chain" id="PRO_0000429885" description="D-galactonate dehydratase family member RspA">
    <location>
        <begin position="1"/>
        <end position="415"/>
    </location>
</feature>
<feature type="active site" description="Proton donor/acceptor" evidence="1">
    <location>
        <position position="170"/>
    </location>
</feature>
<feature type="active site" description="Proton donor/acceptor" evidence="1">
    <location>
        <position position="225"/>
    </location>
</feature>
<feature type="binding site" evidence="1">
    <location>
        <position position="48"/>
    </location>
    <ligand>
        <name>substrate</name>
    </ligand>
</feature>
<feature type="binding site" evidence="1">
    <location>
        <position position="133"/>
    </location>
    <ligand>
        <name>substrate</name>
    </ligand>
</feature>
<feature type="binding site" evidence="2">
    <location>
        <position position="223"/>
    </location>
    <ligand>
        <name>Mg(2+)</name>
        <dbReference type="ChEBI" id="CHEBI:18420"/>
    </ligand>
</feature>
<feature type="binding site" evidence="2">
    <location>
        <position position="249"/>
    </location>
    <ligand>
        <name>Mg(2+)</name>
        <dbReference type="ChEBI" id="CHEBI:18420"/>
    </ligand>
</feature>
<feature type="binding site" evidence="2">
    <location>
        <position position="250"/>
    </location>
    <ligand>
        <name>Mg(2+)</name>
        <dbReference type="ChEBI" id="CHEBI:18420"/>
    </ligand>
</feature>
<feature type="binding site" evidence="2">
    <location>
        <position position="275"/>
    </location>
    <ligand>
        <name>Mg(2+)</name>
        <dbReference type="ChEBI" id="CHEBI:18420"/>
    </ligand>
</feature>
<feature type="binding site" evidence="1">
    <location>
        <position position="275"/>
    </location>
    <ligand>
        <name>substrate</name>
    </ligand>
</feature>
<feature type="binding site" evidence="1">
    <location>
        <position position="296"/>
    </location>
    <ligand>
        <name>substrate</name>
    </ligand>
</feature>
<feature type="binding site" evidence="1">
    <location>
        <position position="325"/>
    </location>
    <ligand>
        <name>substrate</name>
    </ligand>
</feature>
<feature type="binding site" evidence="1">
    <location>
        <position position="329"/>
    </location>
    <ligand>
        <name>substrate</name>
    </ligand>
</feature>
<feature type="binding site" evidence="1">
    <location>
        <position position="352"/>
    </location>
    <ligand>
        <name>substrate</name>
    </ligand>
</feature>
<feature type="site" description="Important for activity and substrate specificity; Pro is observed in family members with low D-mannonate dehydratase activity" evidence="1">
    <location>
        <position position="327"/>
    </location>
</feature>
<feature type="strand" evidence="4">
    <location>
        <begin position="14"/>
        <end position="22"/>
    </location>
</feature>
<feature type="strand" evidence="4">
    <location>
        <begin position="24"/>
        <end position="26"/>
    </location>
</feature>
<feature type="strand" evidence="4">
    <location>
        <begin position="28"/>
        <end position="35"/>
    </location>
</feature>
<feature type="strand" evidence="4">
    <location>
        <begin position="40"/>
        <end position="44"/>
    </location>
</feature>
<feature type="helix" evidence="4">
    <location>
        <begin position="51"/>
        <end position="61"/>
    </location>
</feature>
<feature type="helix" evidence="4">
    <location>
        <begin position="63"/>
        <end position="66"/>
    </location>
</feature>
<feature type="helix" evidence="4">
    <location>
        <begin position="74"/>
        <end position="84"/>
    </location>
</feature>
<feature type="helix" evidence="4">
    <location>
        <begin position="91"/>
        <end position="111"/>
    </location>
</feature>
<feature type="helix" evidence="4">
    <location>
        <begin position="116"/>
        <end position="119"/>
    </location>
</feature>
<feature type="strand" evidence="4">
    <location>
        <begin position="126"/>
        <end position="134"/>
    </location>
</feature>
<feature type="helix" evidence="4">
    <location>
        <begin position="139"/>
        <end position="151"/>
    </location>
</feature>
<feature type="strand" evidence="4">
    <location>
        <begin position="155"/>
        <end position="159"/>
    </location>
</feature>
<feature type="strand" evidence="4">
    <location>
        <begin position="183"/>
        <end position="188"/>
    </location>
</feature>
<feature type="strand" evidence="4">
    <location>
        <begin position="191"/>
        <end position="193"/>
    </location>
</feature>
<feature type="helix" evidence="4">
    <location>
        <begin position="196"/>
        <end position="202"/>
    </location>
</feature>
<feature type="helix" evidence="4">
    <location>
        <begin position="204"/>
        <end position="213"/>
    </location>
</feature>
<feature type="strand" evidence="4">
    <location>
        <begin position="216"/>
        <end position="223"/>
    </location>
</feature>
<feature type="helix" evidence="4">
    <location>
        <begin position="230"/>
        <end position="239"/>
    </location>
</feature>
<feature type="helix" evidence="4">
    <location>
        <begin position="240"/>
        <end position="243"/>
    </location>
</feature>
<feature type="strand" evidence="4">
    <location>
        <begin position="246"/>
        <end position="249"/>
    </location>
</feature>
<feature type="helix" evidence="4">
    <location>
        <begin position="257"/>
        <end position="260"/>
    </location>
</feature>
<feature type="helix" evidence="4">
    <location>
        <begin position="261"/>
        <end position="264"/>
    </location>
</feature>
<feature type="strand" evidence="4">
    <location>
        <begin position="271"/>
        <end position="273"/>
    </location>
</feature>
<feature type="helix" evidence="4">
    <location>
        <begin position="280"/>
        <end position="282"/>
    </location>
</feature>
<feature type="helix" evidence="4">
    <location>
        <begin position="284"/>
        <end position="288"/>
    </location>
</feature>
<feature type="strand" evidence="4">
    <location>
        <begin position="293"/>
        <end position="295"/>
    </location>
</feature>
<feature type="turn" evidence="4">
    <location>
        <begin position="299"/>
        <end position="303"/>
    </location>
</feature>
<feature type="helix" evidence="4">
    <location>
        <begin position="304"/>
        <end position="316"/>
    </location>
</feature>
<feature type="turn" evidence="4">
    <location>
        <begin position="317"/>
        <end position="319"/>
    </location>
</feature>
<feature type="helix" evidence="4">
    <location>
        <begin position="332"/>
        <end position="344"/>
    </location>
</feature>
<feature type="helix" evidence="4">
    <location>
        <begin position="358"/>
        <end position="361"/>
    </location>
</feature>
<feature type="strand" evidence="4">
    <location>
        <begin position="369"/>
        <end position="371"/>
    </location>
</feature>
<feature type="strand" evidence="4">
    <location>
        <begin position="374"/>
        <end position="376"/>
    </location>
</feature>
<feature type="strand" evidence="4">
    <location>
        <begin position="379"/>
        <end position="382"/>
    </location>
</feature>
<feature type="helix" evidence="4">
    <location>
        <begin position="389"/>
        <end position="393"/>
    </location>
</feature>
<feature type="strand" evidence="4">
    <location>
        <begin position="404"/>
        <end position="406"/>
    </location>
</feature>
<evidence type="ECO:0000250" key="1"/>
<evidence type="ECO:0000269" key="2">
    <source>
    </source>
</evidence>
<evidence type="ECO:0000305" key="3"/>
<evidence type="ECO:0007829" key="4">
    <source>
        <dbReference type="PDB" id="4IL2"/>
    </source>
</evidence>
<accession>Q8FHC7</accession>
<dbReference type="EC" id="4.2.1.-"/>
<dbReference type="EC" id="4.2.1.8"/>
<dbReference type="EMBL" id="AE014075">
    <property type="protein sequence ID" value="AAN80431.1"/>
    <property type="molecule type" value="Genomic_DNA"/>
</dbReference>
<dbReference type="PDB" id="4IL2">
    <property type="method" value="X-ray"/>
    <property type="resolution" value="1.95 A"/>
    <property type="chains" value="A/B/C/D=1-415"/>
</dbReference>
<dbReference type="PDBsum" id="4IL2"/>
<dbReference type="SMR" id="Q8FHC7"/>
<dbReference type="STRING" id="199310.c1971"/>
<dbReference type="KEGG" id="ecc:c1971"/>
<dbReference type="eggNOG" id="COG4948">
    <property type="taxonomic scope" value="Bacteria"/>
</dbReference>
<dbReference type="HOGENOM" id="CLU_030273_6_1_6"/>
<dbReference type="BioCyc" id="ECOL199310:C1971-MONOMER"/>
<dbReference type="EvolutionaryTrace" id="Q8FHC7"/>
<dbReference type="Proteomes" id="UP000001410">
    <property type="component" value="Chromosome"/>
</dbReference>
<dbReference type="GO" id="GO:0000287">
    <property type="term" value="F:magnesium ion binding"/>
    <property type="evidence" value="ECO:0000314"/>
    <property type="project" value="UniProtKB"/>
</dbReference>
<dbReference type="GO" id="GO:0008927">
    <property type="term" value="F:mannonate dehydratase activity"/>
    <property type="evidence" value="ECO:0000314"/>
    <property type="project" value="UniProtKB"/>
</dbReference>
<dbReference type="GO" id="GO:0009063">
    <property type="term" value="P:amino acid catabolic process"/>
    <property type="evidence" value="ECO:0007669"/>
    <property type="project" value="InterPro"/>
</dbReference>
<dbReference type="GO" id="GO:0016052">
    <property type="term" value="P:carbohydrate catabolic process"/>
    <property type="evidence" value="ECO:0000314"/>
    <property type="project" value="UniProtKB"/>
</dbReference>
<dbReference type="CDD" id="cd03322">
    <property type="entry name" value="RspA"/>
    <property type="match status" value="1"/>
</dbReference>
<dbReference type="FunFam" id="3.20.20.120:FF:000004">
    <property type="entry name" value="D-galactonate dehydratase family protein"/>
    <property type="match status" value="1"/>
</dbReference>
<dbReference type="FunFam" id="3.30.390.10:FF:000002">
    <property type="entry name" value="D-galactonate dehydratase family protein"/>
    <property type="match status" value="1"/>
</dbReference>
<dbReference type="Gene3D" id="3.20.20.120">
    <property type="entry name" value="Enolase-like C-terminal domain"/>
    <property type="match status" value="1"/>
</dbReference>
<dbReference type="Gene3D" id="3.30.390.10">
    <property type="entry name" value="Enolase-like, N-terminal domain"/>
    <property type="match status" value="1"/>
</dbReference>
<dbReference type="InterPro" id="IPR034589">
    <property type="entry name" value="D-mannonate_dehydratase-like"/>
</dbReference>
<dbReference type="InterPro" id="IPR053379">
    <property type="entry name" value="D-mannonate_dehydratase_GalD"/>
</dbReference>
<dbReference type="InterPro" id="IPR034593">
    <property type="entry name" value="DgoD-like"/>
</dbReference>
<dbReference type="InterPro" id="IPR036849">
    <property type="entry name" value="Enolase-like_C_sf"/>
</dbReference>
<dbReference type="InterPro" id="IPR029017">
    <property type="entry name" value="Enolase-like_N"/>
</dbReference>
<dbReference type="InterPro" id="IPR029065">
    <property type="entry name" value="Enolase_C-like"/>
</dbReference>
<dbReference type="InterPro" id="IPR018110">
    <property type="entry name" value="Mandel_Rmase/mucon_lact_enz_CS"/>
</dbReference>
<dbReference type="InterPro" id="IPR013342">
    <property type="entry name" value="Mandelate_racemase_C"/>
</dbReference>
<dbReference type="InterPro" id="IPR013341">
    <property type="entry name" value="Mandelate_racemase_N_dom"/>
</dbReference>
<dbReference type="NCBIfam" id="NF043051">
    <property type="entry name" value="ManoateDhtManD"/>
    <property type="match status" value="1"/>
</dbReference>
<dbReference type="NCBIfam" id="NF011654">
    <property type="entry name" value="PRK15072.1"/>
    <property type="match status" value="1"/>
</dbReference>
<dbReference type="PANTHER" id="PTHR48080">
    <property type="entry name" value="D-GALACTONATE DEHYDRATASE-RELATED"/>
    <property type="match status" value="1"/>
</dbReference>
<dbReference type="PANTHER" id="PTHR48080:SF6">
    <property type="entry name" value="STARVATION-SENSING PROTEIN RSPA"/>
    <property type="match status" value="1"/>
</dbReference>
<dbReference type="Pfam" id="PF13378">
    <property type="entry name" value="MR_MLE_C"/>
    <property type="match status" value="1"/>
</dbReference>
<dbReference type="Pfam" id="PF02746">
    <property type="entry name" value="MR_MLE_N"/>
    <property type="match status" value="1"/>
</dbReference>
<dbReference type="SFLD" id="SFLDS00001">
    <property type="entry name" value="Enolase"/>
    <property type="match status" value="1"/>
</dbReference>
<dbReference type="SFLD" id="SFLDG00033">
    <property type="entry name" value="mannonate_dehydratase"/>
    <property type="match status" value="1"/>
</dbReference>
<dbReference type="SMART" id="SM00922">
    <property type="entry name" value="MR_MLE"/>
    <property type="match status" value="1"/>
</dbReference>
<dbReference type="SUPFAM" id="SSF51604">
    <property type="entry name" value="Enolase C-terminal domain-like"/>
    <property type="match status" value="1"/>
</dbReference>
<dbReference type="SUPFAM" id="SSF54826">
    <property type="entry name" value="Enolase N-terminal domain-like"/>
    <property type="match status" value="1"/>
</dbReference>
<dbReference type="PROSITE" id="PS00908">
    <property type="entry name" value="MR_MLE_1"/>
    <property type="match status" value="1"/>
</dbReference>
<dbReference type="PROSITE" id="PS00909">
    <property type="entry name" value="MR_MLE_2"/>
    <property type="match status" value="1"/>
</dbReference>
<organism>
    <name type="scientific">Escherichia coli O6:H1 (strain CFT073 / ATCC 700928 / UPEC)</name>
    <dbReference type="NCBI Taxonomy" id="199310"/>
    <lineage>
        <taxon>Bacteria</taxon>
        <taxon>Pseudomonadati</taxon>
        <taxon>Pseudomonadota</taxon>
        <taxon>Gammaproteobacteria</taxon>
        <taxon>Enterobacterales</taxon>
        <taxon>Enterobacteriaceae</taxon>
        <taxon>Escherichia</taxon>
    </lineage>
</organism>
<name>MAND_ECOL6</name>
<gene>
    <name type="primary">rspA</name>
    <name type="ordered locus">c1971</name>
</gene>
<protein>
    <recommendedName>
        <fullName>D-galactonate dehydratase family member RspA</fullName>
        <ecNumber>4.2.1.-</ecNumber>
    </recommendedName>
    <alternativeName>
        <fullName>D-mannonate dehydratase</fullName>
        <ecNumber>4.2.1.8</ecNumber>
    </alternativeName>
    <alternativeName>
        <fullName>Starvation sensing protein RspA homolog</fullName>
    </alternativeName>
</protein>
<proteinExistence type="evidence at protein level"/>
<sequence length="415" mass="47350">MHHDKRCKESNMKIVKAEVFVTCPGRNFVTLKITTEDGITGLGDATLNGRELSVASYLQDHLCPQLIGRDAHRIEDIWQFFYKGAYWRRGPVTMSAISAVDMALWDIKAKAANMPLYQLLGGASREGVMVYCHTTGHSIDEALDDYARHQELGFKAIRVQCGIPGMKTTYGMSKGKGLAYEPATKGQWPEEQLWSTEKYLDFMPKLFDAVRNKFGFDEHLLHDMHHRLTPIEAARFGKSIEDYRMFWMEDPTPAENQECFRLIRQHTVTPIAVGEVFNSIWDCKQLIEEQLIDYIRTTLTHAGGITGMRRIADFASLYQVRTGSHGPSDLSPVCMAAALHFDLWVPNFGVQEYMGYSEQMLEVFPHNWTFDNGYMHPGEKPGLGIEFDEKLAAKYPYEPAYLPVARLEDGTLWNW</sequence>
<keyword id="KW-0002">3D-structure</keyword>
<keyword id="KW-0456">Lyase</keyword>
<keyword id="KW-0460">Magnesium</keyword>
<keyword id="KW-0479">Metal-binding</keyword>
<keyword id="KW-1185">Reference proteome</keyword>